<accession>P40117</accession>
<accession>Q0K1E4</accession>
<protein>
    <recommendedName>
        <fullName evidence="1">Ribulose-phosphate 3-epimerase 1</fullName>
        <ecNumber evidence="1">5.1.3.1</ecNumber>
    </recommendedName>
</protein>
<evidence type="ECO:0000255" key="1">
    <source>
        <dbReference type="HAMAP-Rule" id="MF_02227"/>
    </source>
</evidence>
<feature type="chain" id="PRO_0000171556" description="Ribulose-phosphate 3-epimerase 1">
    <location>
        <begin position="1"/>
        <end position="241"/>
    </location>
</feature>
<feature type="active site" description="Proton acceptor" evidence="1">
    <location>
        <position position="48"/>
    </location>
</feature>
<feature type="active site" description="Proton donor" evidence="1">
    <location>
        <position position="192"/>
    </location>
</feature>
<feature type="binding site" evidence="1">
    <location>
        <position position="21"/>
    </location>
    <ligand>
        <name>substrate</name>
    </ligand>
</feature>
<feature type="binding site" evidence="1">
    <location>
        <position position="46"/>
    </location>
    <ligand>
        <name>a divalent metal cation</name>
        <dbReference type="ChEBI" id="CHEBI:60240"/>
    </ligand>
</feature>
<feature type="binding site" evidence="1">
    <location>
        <position position="48"/>
    </location>
    <ligand>
        <name>a divalent metal cation</name>
        <dbReference type="ChEBI" id="CHEBI:60240"/>
    </ligand>
</feature>
<feature type="binding site" evidence="1">
    <location>
        <position position="79"/>
    </location>
    <ligand>
        <name>a divalent metal cation</name>
        <dbReference type="ChEBI" id="CHEBI:60240"/>
    </ligand>
</feature>
<feature type="binding site" evidence="1">
    <location>
        <position position="79"/>
    </location>
    <ligand>
        <name>substrate</name>
    </ligand>
</feature>
<feature type="binding site" evidence="1">
    <location>
        <begin position="155"/>
        <end position="158"/>
    </location>
    <ligand>
        <name>substrate</name>
    </ligand>
</feature>
<feature type="binding site" evidence="1">
    <location>
        <begin position="192"/>
        <end position="194"/>
    </location>
    <ligand>
        <name>substrate</name>
    </ligand>
</feature>
<feature type="binding site" evidence="1">
    <location>
        <position position="192"/>
    </location>
    <ligand>
        <name>a divalent metal cation</name>
        <dbReference type="ChEBI" id="CHEBI:60240"/>
    </ligand>
</feature>
<feature type="binding site" evidence="1">
    <location>
        <begin position="214"/>
        <end position="215"/>
    </location>
    <ligand>
        <name>substrate</name>
    </ligand>
</feature>
<comment type="function">
    <text evidence="1">Catalyzes the reversible epimerization of D-ribulose 5-phosphate to D-xylulose 5-phosphate.</text>
</comment>
<comment type="catalytic activity">
    <reaction evidence="1">
        <text>D-ribulose 5-phosphate = D-xylulose 5-phosphate</text>
        <dbReference type="Rhea" id="RHEA:13677"/>
        <dbReference type="ChEBI" id="CHEBI:57737"/>
        <dbReference type="ChEBI" id="CHEBI:58121"/>
        <dbReference type="EC" id="5.1.3.1"/>
    </reaction>
</comment>
<comment type="cofactor">
    <cofactor evidence="1">
        <name>a divalent metal cation</name>
        <dbReference type="ChEBI" id="CHEBI:60240"/>
    </cofactor>
    <text evidence="1">Binds 1 divalent metal cation per subunit.</text>
</comment>
<comment type="pathway">
    <text evidence="1">Carbohydrate degradation.</text>
</comment>
<comment type="similarity">
    <text evidence="1">Belongs to the ribulose-phosphate 3-epimerase family.</text>
</comment>
<sequence>MHATELNTGHGSQRAIRLAPSILSADFARLGEEVCAIEAGGADLVHFDVMDNHYVPNLTIGPLVCEAIRPLVSIPIDVHLMVEPVDALIPLFAKAGANIISFHPEASRHVDRTIGLIRDHGCKAGLVLNPATPLGWLDHTLDQLDLVLLMSVNPGFGGQAFIPGVLDKVRQARARIDRQVDAGGRPVWLEIDGGVKADNIAAIARAGADTFVAGSAVFGAPDADGGYSSILYRLREAATVT</sequence>
<dbReference type="EC" id="5.1.3.1" evidence="1"/>
<dbReference type="EMBL" id="M64173">
    <property type="protein sequence ID" value="AAA21962.1"/>
    <property type="molecule type" value="Genomic_DNA"/>
</dbReference>
<dbReference type="EMBL" id="AM260480">
    <property type="protein sequence ID" value="CAJ96180.1"/>
    <property type="molecule type" value="Genomic_DNA"/>
</dbReference>
<dbReference type="PIR" id="C47019">
    <property type="entry name" value="C47019"/>
</dbReference>
<dbReference type="RefSeq" id="WP_011617203.1">
    <property type="nucleotide sequence ID" value="NC_008314.1"/>
</dbReference>
<dbReference type="SMR" id="P40117"/>
<dbReference type="STRING" id="381666.H16_B1391"/>
<dbReference type="KEGG" id="reh:H16_B1391"/>
<dbReference type="eggNOG" id="COG0036">
    <property type="taxonomic scope" value="Bacteria"/>
</dbReference>
<dbReference type="HOGENOM" id="CLU_054856_2_1_4"/>
<dbReference type="OrthoDB" id="1645589at2"/>
<dbReference type="Proteomes" id="UP000008210">
    <property type="component" value="Chromosome 2"/>
</dbReference>
<dbReference type="GO" id="GO:0004750">
    <property type="term" value="F:D-ribulose-phosphate 3-epimerase activity"/>
    <property type="evidence" value="ECO:0007669"/>
    <property type="project" value="UniProtKB-UniRule"/>
</dbReference>
<dbReference type="GO" id="GO:0046872">
    <property type="term" value="F:metal ion binding"/>
    <property type="evidence" value="ECO:0007669"/>
    <property type="project" value="UniProtKB-UniRule"/>
</dbReference>
<dbReference type="GO" id="GO:0019323">
    <property type="term" value="P:pentose catabolic process"/>
    <property type="evidence" value="ECO:0007669"/>
    <property type="project" value="UniProtKB-UniRule"/>
</dbReference>
<dbReference type="GO" id="GO:0006098">
    <property type="term" value="P:pentose-phosphate shunt"/>
    <property type="evidence" value="ECO:0007669"/>
    <property type="project" value="InterPro"/>
</dbReference>
<dbReference type="GO" id="GO:0019253">
    <property type="term" value="P:reductive pentose-phosphate cycle"/>
    <property type="evidence" value="ECO:0007669"/>
    <property type="project" value="UniProtKB-KW"/>
</dbReference>
<dbReference type="CDD" id="cd00429">
    <property type="entry name" value="RPE"/>
    <property type="match status" value="1"/>
</dbReference>
<dbReference type="FunFam" id="3.20.20.70:FF:000004">
    <property type="entry name" value="Ribulose-phosphate 3-epimerase"/>
    <property type="match status" value="1"/>
</dbReference>
<dbReference type="Gene3D" id="3.20.20.70">
    <property type="entry name" value="Aldolase class I"/>
    <property type="match status" value="1"/>
</dbReference>
<dbReference type="HAMAP" id="MF_02227">
    <property type="entry name" value="RPE"/>
    <property type="match status" value="1"/>
</dbReference>
<dbReference type="InterPro" id="IPR013785">
    <property type="entry name" value="Aldolase_TIM"/>
</dbReference>
<dbReference type="InterPro" id="IPR026019">
    <property type="entry name" value="Ribul_P_3_epim"/>
</dbReference>
<dbReference type="InterPro" id="IPR000056">
    <property type="entry name" value="Ribul_P_3_epim-like"/>
</dbReference>
<dbReference type="InterPro" id="IPR011060">
    <property type="entry name" value="RibuloseP-bd_barrel"/>
</dbReference>
<dbReference type="NCBIfam" id="NF004076">
    <property type="entry name" value="PRK05581.1-4"/>
    <property type="match status" value="1"/>
</dbReference>
<dbReference type="NCBIfam" id="TIGR01163">
    <property type="entry name" value="rpe"/>
    <property type="match status" value="1"/>
</dbReference>
<dbReference type="PANTHER" id="PTHR11749">
    <property type="entry name" value="RIBULOSE-5-PHOSPHATE-3-EPIMERASE"/>
    <property type="match status" value="1"/>
</dbReference>
<dbReference type="Pfam" id="PF00834">
    <property type="entry name" value="Ribul_P_3_epim"/>
    <property type="match status" value="1"/>
</dbReference>
<dbReference type="PIRSF" id="PIRSF001461">
    <property type="entry name" value="RPE"/>
    <property type="match status" value="1"/>
</dbReference>
<dbReference type="SUPFAM" id="SSF51366">
    <property type="entry name" value="Ribulose-phoshate binding barrel"/>
    <property type="match status" value="1"/>
</dbReference>
<dbReference type="PROSITE" id="PS01085">
    <property type="entry name" value="RIBUL_P_3_EPIMER_1"/>
    <property type="match status" value="1"/>
</dbReference>
<dbReference type="PROSITE" id="PS01086">
    <property type="entry name" value="RIBUL_P_3_EPIMER_2"/>
    <property type="match status" value="1"/>
</dbReference>
<gene>
    <name evidence="1" type="primary">rpe1</name>
    <name type="synonym">cbbE2</name>
    <name type="synonym">cbbEC</name>
    <name type="synonym">cfxE</name>
    <name type="ordered locus">H16_B1391</name>
</gene>
<proteinExistence type="inferred from homology"/>
<reference key="1">
    <citation type="journal article" date="1992" name="J. Bacteriol.">
        <title>The Calvin cycle enzyme pentose-5-phosphate 3-epimerase is encoded within the cfx operons of the chemoautotroph Alcaligenes eutrophus.</title>
        <authorList>
            <person name="Kusian B."/>
            <person name="Yoo J.-G."/>
            <person name="Bednarski R."/>
            <person name="Bowien B."/>
        </authorList>
    </citation>
    <scope>NUCLEOTIDE SEQUENCE [GENOMIC DNA]</scope>
</reference>
<reference key="2">
    <citation type="journal article" date="2006" name="Nat. Biotechnol.">
        <title>Genome sequence of the bioplastic-producing 'Knallgas' bacterium Ralstonia eutropha H16.</title>
        <authorList>
            <person name="Pohlmann A."/>
            <person name="Fricke W.F."/>
            <person name="Reinecke F."/>
            <person name="Kusian B."/>
            <person name="Liesegang H."/>
            <person name="Cramm R."/>
            <person name="Eitinger T."/>
            <person name="Ewering C."/>
            <person name="Poetter M."/>
            <person name="Schwartz E."/>
            <person name="Strittmatter A."/>
            <person name="Voss I."/>
            <person name="Gottschalk G."/>
            <person name="Steinbuechel A."/>
            <person name="Friedrich B."/>
            <person name="Bowien B."/>
        </authorList>
    </citation>
    <scope>NUCLEOTIDE SEQUENCE [LARGE SCALE GENOMIC DNA]</scope>
    <source>
        <strain>ATCC 17699 / DSM 428 / KCTC 22496 / NCIMB 10442 / H16 / Stanier 337</strain>
    </source>
</reference>
<keyword id="KW-0113">Calvin cycle</keyword>
<keyword id="KW-0119">Carbohydrate metabolism</keyword>
<keyword id="KW-0413">Isomerase</keyword>
<keyword id="KW-0479">Metal-binding</keyword>
<keyword id="KW-1185">Reference proteome</keyword>
<organism>
    <name type="scientific">Cupriavidus necator (strain ATCC 17699 / DSM 428 / KCTC 22496 / NCIMB 10442 / H16 / Stanier 337)</name>
    <name type="common">Ralstonia eutropha</name>
    <dbReference type="NCBI Taxonomy" id="381666"/>
    <lineage>
        <taxon>Bacteria</taxon>
        <taxon>Pseudomonadati</taxon>
        <taxon>Pseudomonadota</taxon>
        <taxon>Betaproteobacteria</taxon>
        <taxon>Burkholderiales</taxon>
        <taxon>Burkholderiaceae</taxon>
        <taxon>Cupriavidus</taxon>
    </lineage>
</organism>
<name>RPE1_CUPNH</name>